<keyword id="KW-0028">Amino-acid biosynthesis</keyword>
<keyword id="KW-0963">Cytoplasm</keyword>
<keyword id="KW-0238">DNA-binding</keyword>
<keyword id="KW-0486">Methionine biosynthesis</keyword>
<keyword id="KW-1185">Reference proteome</keyword>
<keyword id="KW-0678">Repressor</keyword>
<keyword id="KW-0804">Transcription</keyword>
<keyword id="KW-0805">Transcription regulation</keyword>
<organism>
    <name type="scientific">Escherichia coli O157:H7</name>
    <dbReference type="NCBI Taxonomy" id="83334"/>
    <lineage>
        <taxon>Bacteria</taxon>
        <taxon>Pseudomonadati</taxon>
        <taxon>Pseudomonadota</taxon>
        <taxon>Gammaproteobacteria</taxon>
        <taxon>Enterobacterales</taxon>
        <taxon>Enterobacteriaceae</taxon>
        <taxon>Escherichia</taxon>
    </lineage>
</organism>
<gene>
    <name type="primary">metJ</name>
    <name type="ordered locus">Z5493</name>
    <name type="ordered locus">ECs4867</name>
</gene>
<evidence type="ECO:0000250" key="1"/>
<evidence type="ECO:0000305" key="2"/>
<reference key="1">
    <citation type="journal article" date="2001" name="Nature">
        <title>Genome sequence of enterohaemorrhagic Escherichia coli O157:H7.</title>
        <authorList>
            <person name="Perna N.T."/>
            <person name="Plunkett G. III"/>
            <person name="Burland V."/>
            <person name="Mau B."/>
            <person name="Glasner J.D."/>
            <person name="Rose D.J."/>
            <person name="Mayhew G.F."/>
            <person name="Evans P.S."/>
            <person name="Gregor J."/>
            <person name="Kirkpatrick H.A."/>
            <person name="Posfai G."/>
            <person name="Hackett J."/>
            <person name="Klink S."/>
            <person name="Boutin A."/>
            <person name="Shao Y."/>
            <person name="Miller L."/>
            <person name="Grotbeck E.J."/>
            <person name="Davis N.W."/>
            <person name="Lim A."/>
            <person name="Dimalanta E.T."/>
            <person name="Potamousis K."/>
            <person name="Apodaca J."/>
            <person name="Anantharaman T.S."/>
            <person name="Lin J."/>
            <person name="Yen G."/>
            <person name="Schwartz D.C."/>
            <person name="Welch R.A."/>
            <person name="Blattner F.R."/>
        </authorList>
    </citation>
    <scope>NUCLEOTIDE SEQUENCE [LARGE SCALE GENOMIC DNA]</scope>
    <source>
        <strain>O157:H7 / EDL933 / ATCC 700927 / EHEC</strain>
    </source>
</reference>
<reference key="2">
    <citation type="journal article" date="2001" name="DNA Res.">
        <title>Complete genome sequence of enterohemorrhagic Escherichia coli O157:H7 and genomic comparison with a laboratory strain K-12.</title>
        <authorList>
            <person name="Hayashi T."/>
            <person name="Makino K."/>
            <person name="Ohnishi M."/>
            <person name="Kurokawa K."/>
            <person name="Ishii K."/>
            <person name="Yokoyama K."/>
            <person name="Han C.-G."/>
            <person name="Ohtsubo E."/>
            <person name="Nakayama K."/>
            <person name="Murata T."/>
            <person name="Tanaka M."/>
            <person name="Tobe T."/>
            <person name="Iida T."/>
            <person name="Takami H."/>
            <person name="Honda T."/>
            <person name="Sasakawa C."/>
            <person name="Ogasawara N."/>
            <person name="Yasunaga T."/>
            <person name="Kuhara S."/>
            <person name="Shiba T."/>
            <person name="Hattori M."/>
            <person name="Shinagawa H."/>
        </authorList>
    </citation>
    <scope>NUCLEOTIDE SEQUENCE [LARGE SCALE GENOMIC DNA]</scope>
    <source>
        <strain>O157:H7 / Sakai / RIMD 0509952 / EHEC</strain>
    </source>
</reference>
<feature type="initiator methionine" description="Removed" evidence="1">
    <location>
        <position position="1"/>
    </location>
</feature>
<feature type="chain" id="PRO_0000198399" description="Met repressor">
    <location>
        <begin position="2"/>
        <end position="105"/>
    </location>
</feature>
<sequence length="105" mass="12141">MAEWSGEYISPYAEHGKKSEQVKKITVSIPLKVLKILTDERTRRQVNNLRHATNSELLCEAFLHAFTGQPLPDDADLRKERSDEIPEAAKEIMREMGINPETWEY</sequence>
<dbReference type="EMBL" id="AE005174">
    <property type="protein sequence ID" value="AAG59139.1"/>
    <property type="molecule type" value="Genomic_DNA"/>
</dbReference>
<dbReference type="EMBL" id="BA000007">
    <property type="protein sequence ID" value="BAB38290.1"/>
    <property type="molecule type" value="Genomic_DNA"/>
</dbReference>
<dbReference type="PIR" id="C91237">
    <property type="entry name" value="C91237"/>
</dbReference>
<dbReference type="PIR" id="G86084">
    <property type="entry name" value="G86084"/>
</dbReference>
<dbReference type="RefSeq" id="NP_312894.1">
    <property type="nucleotide sequence ID" value="NC_002695.1"/>
</dbReference>
<dbReference type="RefSeq" id="WP_000852812.1">
    <property type="nucleotide sequence ID" value="NZ_VOAI01000032.1"/>
</dbReference>
<dbReference type="SMR" id="P0A8U8"/>
<dbReference type="STRING" id="155864.Z5493"/>
<dbReference type="GeneID" id="915024"/>
<dbReference type="GeneID" id="93777954"/>
<dbReference type="KEGG" id="ece:Z5493"/>
<dbReference type="KEGG" id="ecs:ECs_4867"/>
<dbReference type="PATRIC" id="fig|386585.9.peg.5090"/>
<dbReference type="eggNOG" id="COG3060">
    <property type="taxonomic scope" value="Bacteria"/>
</dbReference>
<dbReference type="HOGENOM" id="CLU_142318_0_0_6"/>
<dbReference type="OMA" id="KWNGEYI"/>
<dbReference type="Proteomes" id="UP000000558">
    <property type="component" value="Chromosome"/>
</dbReference>
<dbReference type="Proteomes" id="UP000002519">
    <property type="component" value="Chromosome"/>
</dbReference>
<dbReference type="GO" id="GO:0005737">
    <property type="term" value="C:cytoplasm"/>
    <property type="evidence" value="ECO:0007669"/>
    <property type="project" value="UniProtKB-SubCell"/>
</dbReference>
<dbReference type="GO" id="GO:0003677">
    <property type="term" value="F:DNA binding"/>
    <property type="evidence" value="ECO:0007669"/>
    <property type="project" value="UniProtKB-KW"/>
</dbReference>
<dbReference type="GO" id="GO:0003700">
    <property type="term" value="F:DNA-binding transcription factor activity"/>
    <property type="evidence" value="ECO:0007669"/>
    <property type="project" value="InterPro"/>
</dbReference>
<dbReference type="GO" id="GO:0009086">
    <property type="term" value="P:methionine biosynthetic process"/>
    <property type="evidence" value="ECO:0007669"/>
    <property type="project" value="UniProtKB-UniRule"/>
</dbReference>
<dbReference type="GO" id="GO:0045892">
    <property type="term" value="P:negative regulation of DNA-templated transcription"/>
    <property type="evidence" value="ECO:0007669"/>
    <property type="project" value="UniProtKB-UniRule"/>
</dbReference>
<dbReference type="CDD" id="cd00490">
    <property type="entry name" value="Met_repressor_MetJ"/>
    <property type="match status" value="1"/>
</dbReference>
<dbReference type="FunFam" id="1.10.140.10:FF:000001">
    <property type="entry name" value="Met repressor"/>
    <property type="match status" value="1"/>
</dbReference>
<dbReference type="Gene3D" id="1.10.140.10">
    <property type="entry name" value="MET Apo-Repressor, subunit A"/>
    <property type="match status" value="1"/>
</dbReference>
<dbReference type="HAMAP" id="MF_00744">
    <property type="entry name" value="MetJ"/>
    <property type="match status" value="1"/>
</dbReference>
<dbReference type="InterPro" id="IPR002084">
    <property type="entry name" value="Met_repressor_MetJ"/>
</dbReference>
<dbReference type="InterPro" id="IPR023453">
    <property type="entry name" value="Met_repressor_MetJ_dom_sf"/>
</dbReference>
<dbReference type="InterPro" id="IPR010985">
    <property type="entry name" value="Ribbon_hlx_hlx"/>
</dbReference>
<dbReference type="NCBIfam" id="NF003622">
    <property type="entry name" value="PRK05264.1"/>
    <property type="match status" value="1"/>
</dbReference>
<dbReference type="Pfam" id="PF01340">
    <property type="entry name" value="MetJ"/>
    <property type="match status" value="1"/>
</dbReference>
<dbReference type="SUPFAM" id="SSF47598">
    <property type="entry name" value="Ribbon-helix-helix"/>
    <property type="match status" value="1"/>
</dbReference>
<accession>P0A8U8</accession>
<accession>P08338</accession>
<name>METJ_ECO57</name>
<comment type="function">
    <text evidence="1">This regulatory protein, when combined with SAM (S-adenosylmethionine) represses the expression of the methionine regulon and of enzymes involved in SAM synthesis.</text>
</comment>
<comment type="subunit">
    <text evidence="1">Homodimer.</text>
</comment>
<comment type="subcellular location">
    <subcellularLocation>
        <location evidence="1">Cytoplasm</location>
    </subcellularLocation>
</comment>
<comment type="domain">
    <text>Does not bind DNA by a helix-turn-helix motif.</text>
</comment>
<comment type="similarity">
    <text evidence="2">Belongs to the MetJ family.</text>
</comment>
<protein>
    <recommendedName>
        <fullName>Met repressor</fullName>
    </recommendedName>
    <alternativeName>
        <fullName>Met regulon regulatory protein MetJ</fullName>
    </alternativeName>
</protein>
<proteinExistence type="inferred from homology"/>